<feature type="chain" id="PRO_0000297297" description="3-methyl-2-oxobutanoate hydroxymethyltransferase">
    <location>
        <begin position="1"/>
        <end position="262"/>
    </location>
</feature>
<feature type="active site" description="Proton acceptor" evidence="1">
    <location>
        <position position="179"/>
    </location>
</feature>
<feature type="binding site" evidence="1">
    <location>
        <begin position="42"/>
        <end position="43"/>
    </location>
    <ligand>
        <name>3-methyl-2-oxobutanoate</name>
        <dbReference type="ChEBI" id="CHEBI:11851"/>
    </ligand>
</feature>
<feature type="binding site" evidence="1">
    <location>
        <position position="42"/>
    </location>
    <ligand>
        <name>Mg(2+)</name>
        <dbReference type="ChEBI" id="CHEBI:18420"/>
    </ligand>
</feature>
<feature type="binding site" evidence="1">
    <location>
        <position position="81"/>
    </location>
    <ligand>
        <name>3-methyl-2-oxobutanoate</name>
        <dbReference type="ChEBI" id="CHEBI:11851"/>
    </ligand>
</feature>
<feature type="binding site" evidence="1">
    <location>
        <position position="81"/>
    </location>
    <ligand>
        <name>Mg(2+)</name>
        <dbReference type="ChEBI" id="CHEBI:18420"/>
    </ligand>
</feature>
<feature type="binding site" evidence="1">
    <location>
        <position position="110"/>
    </location>
    <ligand>
        <name>3-methyl-2-oxobutanoate</name>
        <dbReference type="ChEBI" id="CHEBI:11851"/>
    </ligand>
</feature>
<feature type="binding site" evidence="1">
    <location>
        <position position="112"/>
    </location>
    <ligand>
        <name>Mg(2+)</name>
        <dbReference type="ChEBI" id="CHEBI:18420"/>
    </ligand>
</feature>
<comment type="function">
    <text evidence="1">Catalyzes the reversible reaction in which hydroxymethyl group from 5,10-methylenetetrahydrofolate is transferred onto alpha-ketoisovalerate to form ketopantoate.</text>
</comment>
<comment type="catalytic activity">
    <reaction evidence="1">
        <text>3-methyl-2-oxobutanoate + (6R)-5,10-methylene-5,6,7,8-tetrahydrofolate + H2O = 2-dehydropantoate + (6S)-5,6,7,8-tetrahydrofolate</text>
        <dbReference type="Rhea" id="RHEA:11824"/>
        <dbReference type="ChEBI" id="CHEBI:11561"/>
        <dbReference type="ChEBI" id="CHEBI:11851"/>
        <dbReference type="ChEBI" id="CHEBI:15377"/>
        <dbReference type="ChEBI" id="CHEBI:15636"/>
        <dbReference type="ChEBI" id="CHEBI:57453"/>
        <dbReference type="EC" id="2.1.2.11"/>
    </reaction>
</comment>
<comment type="cofactor">
    <cofactor evidence="1">
        <name>Mg(2+)</name>
        <dbReference type="ChEBI" id="CHEBI:18420"/>
    </cofactor>
    <text evidence="1">Binds 1 Mg(2+) ion per subunit.</text>
</comment>
<comment type="pathway">
    <text evidence="1">Cofactor biosynthesis; (R)-pantothenate biosynthesis; (R)-pantoate from 3-methyl-2-oxobutanoate: step 1/2.</text>
</comment>
<comment type="subunit">
    <text evidence="1">Homodecamer; pentamer of dimers.</text>
</comment>
<comment type="subcellular location">
    <subcellularLocation>
        <location evidence="1">Cytoplasm</location>
    </subcellularLocation>
</comment>
<comment type="similarity">
    <text evidence="1">Belongs to the PanB family.</text>
</comment>
<sequence>MNLLTLQQMKERGEKIAVLTSYDASFAALSDKAGVDVLLVGDSLGMTMQGHANTLAVSLRDMEYHTRCVANGTQHAFIVTDMPFGSFQKTPEQAFENAVLLMAAGAQMVKVEGGAIMLETVRFLVERGIPVCGHLGLTPQSVHQFGGYRVQARDEAAARQLLDDAKALAAAGAGMLVLEMVPAALAAAVSQAVHIPVIGIGAGKYCDGQVLVLQDMLGIYAGKSPRFVRNFMQGAGSIEQAICDYVAAVKAQTFPGIEHTFE</sequence>
<name>PANB_METFK</name>
<evidence type="ECO:0000255" key="1">
    <source>
        <dbReference type="HAMAP-Rule" id="MF_00156"/>
    </source>
</evidence>
<protein>
    <recommendedName>
        <fullName evidence="1">3-methyl-2-oxobutanoate hydroxymethyltransferase</fullName>
        <ecNumber evidence="1">2.1.2.11</ecNumber>
    </recommendedName>
    <alternativeName>
        <fullName evidence="1">Ketopantoate hydroxymethyltransferase</fullName>
        <shortName evidence="1">KPHMT</shortName>
    </alternativeName>
</protein>
<dbReference type="EC" id="2.1.2.11" evidence="1"/>
<dbReference type="EMBL" id="CP000284">
    <property type="protein sequence ID" value="ABE48867.1"/>
    <property type="molecule type" value="Genomic_DNA"/>
</dbReference>
<dbReference type="RefSeq" id="WP_011478964.1">
    <property type="nucleotide sequence ID" value="NC_007947.1"/>
</dbReference>
<dbReference type="SMR" id="Q1H3S0"/>
<dbReference type="STRING" id="265072.Mfla_0597"/>
<dbReference type="KEGG" id="mfa:Mfla_0597"/>
<dbReference type="eggNOG" id="COG0413">
    <property type="taxonomic scope" value="Bacteria"/>
</dbReference>
<dbReference type="HOGENOM" id="CLU_036645_1_0_4"/>
<dbReference type="OrthoDB" id="9781789at2"/>
<dbReference type="UniPathway" id="UPA00028">
    <property type="reaction ID" value="UER00003"/>
</dbReference>
<dbReference type="Proteomes" id="UP000002440">
    <property type="component" value="Chromosome"/>
</dbReference>
<dbReference type="GO" id="GO:0005737">
    <property type="term" value="C:cytoplasm"/>
    <property type="evidence" value="ECO:0007669"/>
    <property type="project" value="UniProtKB-SubCell"/>
</dbReference>
<dbReference type="GO" id="GO:0003864">
    <property type="term" value="F:3-methyl-2-oxobutanoate hydroxymethyltransferase activity"/>
    <property type="evidence" value="ECO:0007669"/>
    <property type="project" value="UniProtKB-UniRule"/>
</dbReference>
<dbReference type="GO" id="GO:0000287">
    <property type="term" value="F:magnesium ion binding"/>
    <property type="evidence" value="ECO:0007669"/>
    <property type="project" value="TreeGrafter"/>
</dbReference>
<dbReference type="GO" id="GO:0015940">
    <property type="term" value="P:pantothenate biosynthetic process"/>
    <property type="evidence" value="ECO:0007669"/>
    <property type="project" value="UniProtKB-UniRule"/>
</dbReference>
<dbReference type="CDD" id="cd06557">
    <property type="entry name" value="KPHMT-like"/>
    <property type="match status" value="1"/>
</dbReference>
<dbReference type="FunFam" id="3.20.20.60:FF:000003">
    <property type="entry name" value="3-methyl-2-oxobutanoate hydroxymethyltransferase"/>
    <property type="match status" value="1"/>
</dbReference>
<dbReference type="Gene3D" id="3.20.20.60">
    <property type="entry name" value="Phosphoenolpyruvate-binding domains"/>
    <property type="match status" value="1"/>
</dbReference>
<dbReference type="HAMAP" id="MF_00156">
    <property type="entry name" value="PanB"/>
    <property type="match status" value="1"/>
</dbReference>
<dbReference type="InterPro" id="IPR003700">
    <property type="entry name" value="Pantoate_hydroxy_MeTrfase"/>
</dbReference>
<dbReference type="InterPro" id="IPR015813">
    <property type="entry name" value="Pyrv/PenolPyrv_kinase-like_dom"/>
</dbReference>
<dbReference type="InterPro" id="IPR040442">
    <property type="entry name" value="Pyrv_kinase-like_dom_sf"/>
</dbReference>
<dbReference type="NCBIfam" id="TIGR00222">
    <property type="entry name" value="panB"/>
    <property type="match status" value="1"/>
</dbReference>
<dbReference type="NCBIfam" id="NF001452">
    <property type="entry name" value="PRK00311.1"/>
    <property type="match status" value="1"/>
</dbReference>
<dbReference type="PANTHER" id="PTHR20881">
    <property type="entry name" value="3-METHYL-2-OXOBUTANOATE HYDROXYMETHYLTRANSFERASE"/>
    <property type="match status" value="1"/>
</dbReference>
<dbReference type="PANTHER" id="PTHR20881:SF0">
    <property type="entry name" value="3-METHYL-2-OXOBUTANOATE HYDROXYMETHYLTRANSFERASE"/>
    <property type="match status" value="1"/>
</dbReference>
<dbReference type="Pfam" id="PF02548">
    <property type="entry name" value="Pantoate_transf"/>
    <property type="match status" value="1"/>
</dbReference>
<dbReference type="PIRSF" id="PIRSF000388">
    <property type="entry name" value="Pantoate_hydroxy_MeTrfase"/>
    <property type="match status" value="1"/>
</dbReference>
<dbReference type="SUPFAM" id="SSF51621">
    <property type="entry name" value="Phosphoenolpyruvate/pyruvate domain"/>
    <property type="match status" value="1"/>
</dbReference>
<gene>
    <name evidence="1" type="primary">panB</name>
    <name type="ordered locus">Mfla_0597</name>
</gene>
<organism>
    <name type="scientific">Methylobacillus flagellatus (strain ATCC 51484 / DSM 6875 / VKM B-1610 / KT)</name>
    <dbReference type="NCBI Taxonomy" id="265072"/>
    <lineage>
        <taxon>Bacteria</taxon>
        <taxon>Pseudomonadati</taxon>
        <taxon>Pseudomonadota</taxon>
        <taxon>Betaproteobacteria</taxon>
        <taxon>Nitrosomonadales</taxon>
        <taxon>Methylophilaceae</taxon>
        <taxon>Methylobacillus</taxon>
    </lineage>
</organism>
<keyword id="KW-0963">Cytoplasm</keyword>
<keyword id="KW-0460">Magnesium</keyword>
<keyword id="KW-0479">Metal-binding</keyword>
<keyword id="KW-0566">Pantothenate biosynthesis</keyword>
<keyword id="KW-1185">Reference proteome</keyword>
<keyword id="KW-0808">Transferase</keyword>
<accession>Q1H3S0</accession>
<proteinExistence type="inferred from homology"/>
<reference key="1">
    <citation type="submission" date="2006-03" db="EMBL/GenBank/DDBJ databases">
        <title>Complete sequence of Methylobacillus flagellatus KT.</title>
        <authorList>
            <consortium name="US DOE Joint Genome Institute"/>
            <person name="Copeland A."/>
            <person name="Lucas S."/>
            <person name="Lapidus A."/>
            <person name="Barry K."/>
            <person name="Detter J.C."/>
            <person name="Glavina del Rio T."/>
            <person name="Hammon N."/>
            <person name="Israni S."/>
            <person name="Dalin E."/>
            <person name="Tice H."/>
            <person name="Pitluck S."/>
            <person name="Brettin T."/>
            <person name="Bruce D."/>
            <person name="Han C."/>
            <person name="Tapia R."/>
            <person name="Saunders E."/>
            <person name="Gilna P."/>
            <person name="Schmutz J."/>
            <person name="Larimer F."/>
            <person name="Land M."/>
            <person name="Kyrpides N."/>
            <person name="Anderson I."/>
            <person name="Richardson P."/>
        </authorList>
    </citation>
    <scope>NUCLEOTIDE SEQUENCE [LARGE SCALE GENOMIC DNA]</scope>
    <source>
        <strain>ATCC 51484 / DSM 6875 / VKM B-1610 / KT</strain>
    </source>
</reference>